<proteinExistence type="evidence at protein level"/>
<accession>A2AAE1</accession>
<accession>A2AAD2</accession>
<accession>A2AAD4</accession>
<accession>E9Q376</accession>
<accession>Q05BP8</accession>
<accession>Q3UG08</accession>
<accession>Q3UYB7</accession>
<accession>Q571C4</accession>
<accession>Q69ZR8</accession>
<accession>Q6AXD9</accession>
<accession>Q8BWF1</accession>
<accession>Q8BY77</accession>
<accession>Q8CEA4</accession>
<accession>Q8R0A8</accession>
<comment type="function">
    <text evidence="2">Tube-forming lipid transport protein which provides phosphatidylethanolamine for glycosylphosphatidylinositol (GPI) anchor synthesis in the endoplasmic reticulum. Plays a role in endosomal trafficking and endosome recycling. Also involved in the actin cytoskeleton and cilia structural dynamics. Acts as a regulator of phagocytosis.</text>
</comment>
<comment type="subcellular location">
    <subcellularLocation>
        <location evidence="1">Cell membrane</location>
        <topology evidence="3">Single-pass membrane protein</topology>
    </subcellularLocation>
    <subcellularLocation>
        <location evidence="1">Endoplasmic reticulum membrane</location>
        <topology evidence="3">Single-pass membrane protein</topology>
    </subcellularLocation>
    <subcellularLocation>
        <location evidence="1">Mitochondrion membrane</location>
        <topology evidence="3">Single-pass membrane protein</topology>
    </subcellularLocation>
    <text evidence="1">Localizes to endoplasmic reticulum-cell membrane and some endoplasmic reticulum-mitochondria contact sites.</text>
</comment>
<comment type="alternative products">
    <event type="alternative splicing"/>
    <isoform>
        <id>A2AAE1-1</id>
        <name>1</name>
        <sequence type="displayed"/>
    </isoform>
    <isoform>
        <id>A2AAE1-2</id>
        <name>2</name>
        <sequence type="described" ref="VSP_031037"/>
    </isoform>
    <isoform>
        <id>A2AAE1-3</id>
        <name>3</name>
        <sequence type="described" ref="VSP_031036 VSP_031037 VSP_031038"/>
    </isoform>
    <isoform>
        <id>A2AAE1-4</id>
        <name>4</name>
        <sequence type="described" ref="VSP_031032 VSP_031033"/>
    </isoform>
    <isoform>
        <id>A2AAE1-5</id>
        <name>5</name>
        <sequence type="described" ref="VSP_031034 VSP_031035"/>
    </isoform>
    <isoform>
        <id>A2AAE1-6</id>
        <name>6</name>
        <sequence type="described" ref="VSP_031038"/>
    </isoform>
</comment>
<comment type="tissue specificity">
    <text evidence="5">Highly expressed in testis and ovary. Weakly or not expressed in other tissues.</text>
</comment>
<comment type="developmental stage">
    <text evidence="5">Expressed during spermatogenesis and adipogenesis.</text>
</comment>
<comment type="sequence caution" evidence="10">
    <conflict type="erroneous initiation">
        <sequence resource="EMBL-CDS" id="AAH27125"/>
    </conflict>
    <text>Truncated N-terminus.</text>
</comment>
<comment type="sequence caution" evidence="10">
    <conflict type="erroneous initiation">
        <sequence resource="EMBL-CDS" id="AAH79623"/>
    </conflict>
    <text>Truncated N-terminus.</text>
</comment>
<comment type="sequence caution" evidence="10">
    <conflict type="erroneous initiation">
        <sequence resource="EMBL-CDS" id="BAC31019"/>
    </conflict>
    <text>Truncated N-terminus.</text>
</comment>
<comment type="sequence caution" evidence="10">
    <conflict type="frameshift">
        <sequence resource="EMBL-CDS" id="BAC31019"/>
    </conflict>
</comment>
<comment type="sequence caution" evidence="10">
    <conflict type="erroneous initiation">
        <sequence resource="EMBL-CDS" id="BAC35104"/>
    </conflict>
    <text>Truncated N-terminus.</text>
</comment>
<comment type="sequence caution" evidence="10">
    <conflict type="erroneous initiation">
        <sequence resource="EMBL-CDS" id="BAD90190"/>
    </conflict>
    <text>Extended N-terminus.</text>
</comment>
<comment type="sequence caution" evidence="10">
    <conflict type="erroneous gene model prediction">
        <sequence resource="EMBL-CDS" id="CAM28060"/>
    </conflict>
</comment>
<comment type="sequence caution" evidence="10">
    <conflict type="erroneous gene model prediction">
        <sequence resource="EMBL-CDS" id="CAM28069"/>
    </conflict>
</comment>
<feature type="chain" id="PRO_0000317556" description="Bridge-like lipid transfer protein family member 1">
    <location>
        <begin position="1"/>
        <end position="5005"/>
    </location>
</feature>
<feature type="transmembrane region" description="Helical" evidence="3">
    <location>
        <begin position="27"/>
        <end position="47"/>
    </location>
</feature>
<feature type="region of interest" description="Disordered" evidence="4">
    <location>
        <begin position="692"/>
        <end position="718"/>
    </location>
</feature>
<feature type="region of interest" description="Disordered" evidence="4">
    <location>
        <begin position="1205"/>
        <end position="1314"/>
    </location>
</feature>
<feature type="region of interest" description="Disordered" evidence="4">
    <location>
        <begin position="1343"/>
        <end position="1376"/>
    </location>
</feature>
<feature type="region of interest" description="Disordered" evidence="4">
    <location>
        <begin position="1399"/>
        <end position="1425"/>
    </location>
</feature>
<feature type="region of interest" description="Disordered" evidence="4">
    <location>
        <begin position="1521"/>
        <end position="1544"/>
    </location>
</feature>
<feature type="region of interest" description="Disordered" evidence="4">
    <location>
        <begin position="1676"/>
        <end position="1698"/>
    </location>
</feature>
<feature type="region of interest" description="Disordered" evidence="4">
    <location>
        <begin position="1927"/>
        <end position="1991"/>
    </location>
</feature>
<feature type="region of interest" description="Disordered" evidence="4">
    <location>
        <begin position="2165"/>
        <end position="2192"/>
    </location>
</feature>
<feature type="region of interest" description="Disordered" evidence="4">
    <location>
        <begin position="2265"/>
        <end position="2288"/>
    </location>
</feature>
<feature type="region of interest" description="Disordered" evidence="4">
    <location>
        <begin position="2367"/>
        <end position="2387"/>
    </location>
</feature>
<feature type="region of interest" description="Disordered" evidence="4">
    <location>
        <begin position="2400"/>
        <end position="2420"/>
    </location>
</feature>
<feature type="region of interest" description="Disordered" evidence="4">
    <location>
        <begin position="2598"/>
        <end position="2677"/>
    </location>
</feature>
<feature type="region of interest" description="Disordered" evidence="4">
    <location>
        <begin position="2928"/>
        <end position="2967"/>
    </location>
</feature>
<feature type="region of interest" description="Disordered" evidence="4">
    <location>
        <begin position="3614"/>
        <end position="3662"/>
    </location>
</feature>
<feature type="region of interest" description="Disordered" evidence="4">
    <location>
        <begin position="3686"/>
        <end position="3744"/>
    </location>
</feature>
<feature type="region of interest" description="Disordered" evidence="4">
    <location>
        <begin position="3821"/>
        <end position="3843"/>
    </location>
</feature>
<feature type="region of interest" description="Disordered" evidence="4">
    <location>
        <begin position="3935"/>
        <end position="3954"/>
    </location>
</feature>
<feature type="region of interest" description="Disordered" evidence="4">
    <location>
        <begin position="4089"/>
        <end position="4145"/>
    </location>
</feature>
<feature type="region of interest" description="Disordered" evidence="4">
    <location>
        <begin position="4325"/>
        <end position="4396"/>
    </location>
</feature>
<feature type="compositionally biased region" description="Pro residues" evidence="4">
    <location>
        <begin position="708"/>
        <end position="718"/>
    </location>
</feature>
<feature type="compositionally biased region" description="Basic and acidic residues" evidence="4">
    <location>
        <begin position="1205"/>
        <end position="1215"/>
    </location>
</feature>
<feature type="compositionally biased region" description="Low complexity" evidence="4">
    <location>
        <begin position="1226"/>
        <end position="1240"/>
    </location>
</feature>
<feature type="compositionally biased region" description="Basic and acidic residues" evidence="4">
    <location>
        <begin position="1248"/>
        <end position="1275"/>
    </location>
</feature>
<feature type="compositionally biased region" description="Polar residues" evidence="4">
    <location>
        <begin position="1278"/>
        <end position="1303"/>
    </location>
</feature>
<feature type="compositionally biased region" description="Basic residues" evidence="4">
    <location>
        <begin position="1521"/>
        <end position="1530"/>
    </location>
</feature>
<feature type="compositionally biased region" description="Basic and acidic residues" evidence="4">
    <location>
        <begin position="1684"/>
        <end position="1693"/>
    </location>
</feature>
<feature type="compositionally biased region" description="Polar residues" evidence="4">
    <location>
        <begin position="1931"/>
        <end position="1948"/>
    </location>
</feature>
<feature type="compositionally biased region" description="Polar residues" evidence="4">
    <location>
        <begin position="1959"/>
        <end position="1971"/>
    </location>
</feature>
<feature type="compositionally biased region" description="Polar residues" evidence="4">
    <location>
        <begin position="2367"/>
        <end position="2379"/>
    </location>
</feature>
<feature type="compositionally biased region" description="Polar residues" evidence="4">
    <location>
        <begin position="2400"/>
        <end position="2418"/>
    </location>
</feature>
<feature type="compositionally biased region" description="Polar residues" evidence="4">
    <location>
        <begin position="2598"/>
        <end position="2608"/>
    </location>
</feature>
<feature type="compositionally biased region" description="Low complexity" evidence="4">
    <location>
        <begin position="2619"/>
        <end position="2638"/>
    </location>
</feature>
<feature type="compositionally biased region" description="Basic and acidic residues" evidence="4">
    <location>
        <begin position="2643"/>
        <end position="2665"/>
    </location>
</feature>
<feature type="compositionally biased region" description="Polar residues" evidence="4">
    <location>
        <begin position="2949"/>
        <end position="2964"/>
    </location>
</feature>
<feature type="compositionally biased region" description="Polar residues" evidence="4">
    <location>
        <begin position="3686"/>
        <end position="3711"/>
    </location>
</feature>
<feature type="compositionally biased region" description="Acidic residues" evidence="4">
    <location>
        <begin position="3727"/>
        <end position="3736"/>
    </location>
</feature>
<feature type="compositionally biased region" description="Basic and acidic residues" evidence="4">
    <location>
        <begin position="3821"/>
        <end position="3837"/>
    </location>
</feature>
<feature type="compositionally biased region" description="Polar residues" evidence="4">
    <location>
        <begin position="4097"/>
        <end position="4112"/>
    </location>
</feature>
<feature type="compositionally biased region" description="Low complexity" evidence="4">
    <location>
        <begin position="4117"/>
        <end position="4145"/>
    </location>
</feature>
<feature type="compositionally biased region" description="Polar residues" evidence="4">
    <location>
        <begin position="4325"/>
        <end position="4358"/>
    </location>
</feature>
<feature type="compositionally biased region" description="Low complexity" evidence="4">
    <location>
        <begin position="4359"/>
        <end position="4372"/>
    </location>
</feature>
<feature type="compositionally biased region" description="Polar residues" evidence="4">
    <location>
        <begin position="4381"/>
        <end position="4396"/>
    </location>
</feature>
<feature type="modified residue" description="Phosphoserine" evidence="2">
    <location>
        <position position="1301"/>
    </location>
</feature>
<feature type="modified residue" description="Phosphoserine" evidence="2">
    <location>
        <position position="1305"/>
    </location>
</feature>
<feature type="modified residue" description="Phosphoserine" evidence="12">
    <location>
        <position position="1323"/>
    </location>
</feature>
<feature type="modified residue" description="Phosphothreonine" evidence="2">
    <location>
        <position position="1325"/>
    </location>
</feature>
<feature type="modified residue" description="Phosphoserine" evidence="12">
    <location>
        <position position="1355"/>
    </location>
</feature>
<feature type="modified residue" description="Phosphoserine" evidence="2">
    <location>
        <position position="1406"/>
    </location>
</feature>
<feature type="modified residue" description="Phosphoserine" evidence="12">
    <location>
        <position position="1805"/>
    </location>
</feature>
<feature type="modified residue" description="Phosphoserine" evidence="12">
    <location>
        <position position="1808"/>
    </location>
</feature>
<feature type="modified residue" description="Phosphoserine" evidence="12">
    <location>
        <position position="2601"/>
    </location>
</feature>
<feature type="modified residue" description="Phosphoserine" evidence="2">
    <location>
        <position position="2603"/>
    </location>
</feature>
<feature type="modified residue" description="Phosphoserine" evidence="11">
    <location>
        <position position="2755"/>
    </location>
</feature>
<feature type="modified residue" description="Phosphoserine" evidence="2">
    <location>
        <position position="3562"/>
    </location>
</feature>
<feature type="modified residue" description="Phosphoserine" evidence="11">
    <location>
        <position position="3653"/>
    </location>
</feature>
<feature type="modified residue" description="Phosphoserine" evidence="12">
    <location>
        <position position="4124"/>
    </location>
</feature>
<feature type="splice variant" id="VSP_031032" description="In isoform 4." evidence="9">
    <location>
        <begin position="1"/>
        <end position="386"/>
    </location>
</feature>
<feature type="splice variant" id="VSP_031033" description="In isoform 4." evidence="9">
    <location>
        <position position="871"/>
    </location>
</feature>
<feature type="splice variant" id="VSP_031034" description="In isoform 5." evidence="8">
    <original>QRPPVD</original>
    <variation>VMSNDI</variation>
    <location>
        <begin position="872"/>
        <end position="877"/>
    </location>
</feature>
<feature type="splice variant" id="VSP_031035" description="In isoform 5." evidence="8">
    <location>
        <begin position="878"/>
        <end position="5005"/>
    </location>
</feature>
<feature type="splice variant" id="VSP_031036" description="In isoform 3." evidence="6">
    <original>T</original>
    <variation>TSSDGSSVSGDGHKLTFGQRLVNHLLGLAPPNQRYSVPAEYLCDSEMRGSPQSSQSHLKACRAHSWGN</variation>
    <location>
        <position position="3513"/>
    </location>
</feature>
<feature type="splice variant" id="VSP_031037" description="In isoform 2 and isoform 3." evidence="6 7">
    <original>T</original>
    <variation>TLKNTVWGSSPQSRSPGEGYFQ</variation>
    <location>
        <position position="3665"/>
    </location>
</feature>
<feature type="splice variant" id="VSP_031038" description="In isoform 3 and isoform 6." evidence="6 8">
    <location>
        <begin position="3915"/>
        <end position="3949"/>
    </location>
</feature>
<feature type="sequence conflict" description="In Ref. 1; BAE28401." evidence="10" ref="1">
    <original>L</original>
    <variation>I</variation>
    <location>
        <position position="293"/>
    </location>
</feature>
<feature type="sequence conflict" description="In Ref. 1; BAE28401." evidence="10" ref="1">
    <original>D</original>
    <variation>E</variation>
    <location>
        <position position="314"/>
    </location>
</feature>
<feature type="sequence conflict" description="In Ref. 1; BAE28401." evidence="10" ref="1">
    <original>T</original>
    <variation>A</variation>
    <location>
        <position position="391"/>
    </location>
</feature>
<feature type="sequence conflict" description="In Ref. 1; BAE28401." evidence="10" ref="1">
    <original>S</original>
    <variation>C</variation>
    <location>
        <position position="706"/>
    </location>
</feature>
<feature type="sequence conflict" description="In Ref. 1; BAE28401." evidence="10" ref="1">
    <original>M</original>
    <variation>T</variation>
    <location>
        <position position="707"/>
    </location>
</feature>
<feature type="sequence conflict" description="In Ref. 3; BAD90190 and 4; AAH34738." evidence="10" ref="3 4">
    <original>I</original>
    <variation>V</variation>
    <location>
        <position position="997"/>
    </location>
</feature>
<feature type="sequence conflict" description="In Ref. 5; BAD32378." evidence="10" ref="5">
    <original>S</original>
    <variation>N</variation>
    <location>
        <position position="4100"/>
    </location>
</feature>
<feature type="sequence conflict" description="In Ref. 4; AAH27125." evidence="10" ref="4">
    <original>S</original>
    <variation>R</variation>
    <location>
        <position position="4450"/>
    </location>
</feature>
<feature type="sequence conflict" description="In Ref. 4; AAH27125." evidence="10" ref="4">
    <original>M</original>
    <variation>V</variation>
    <location>
        <position position="4451"/>
    </location>
</feature>
<feature type="sequence conflict" description="In Ref. 1; BAC35104." evidence="10" ref="1">
    <original>Q</original>
    <variation>K</variation>
    <location>
        <position position="4582"/>
    </location>
</feature>
<feature type="sequence conflict" description="In Ref. 5; BAD32378." evidence="10" ref="5">
    <original>T</original>
    <variation>A</variation>
    <location>
        <position position="4606"/>
    </location>
</feature>
<feature type="modified residue" description="Phosphoserine" evidence="12">
    <location sequence="A2AAE1-3">
        <position position="3577"/>
    </location>
</feature>
<organism>
    <name type="scientific">Mus musculus</name>
    <name type="common">Mouse</name>
    <dbReference type="NCBI Taxonomy" id="10090"/>
    <lineage>
        <taxon>Eukaryota</taxon>
        <taxon>Metazoa</taxon>
        <taxon>Chordata</taxon>
        <taxon>Craniata</taxon>
        <taxon>Vertebrata</taxon>
        <taxon>Euteleostomi</taxon>
        <taxon>Mammalia</taxon>
        <taxon>Eutheria</taxon>
        <taxon>Euarchontoglires</taxon>
        <taxon>Glires</taxon>
        <taxon>Rodentia</taxon>
        <taxon>Myomorpha</taxon>
        <taxon>Muroidea</taxon>
        <taxon>Muridae</taxon>
        <taxon>Murinae</taxon>
        <taxon>Mus</taxon>
        <taxon>Mus</taxon>
    </lineage>
</organism>
<sequence length="5005" mass="555365">MDQRKNDSIVPSITQLEDFLTEHNSNVVWLLVATILSCGWIIYLTYYNSRNVGLILTLVLNRLYKHGYIHIGSFSFSVLSGKVMVREIYYITEDMSIRIQDGFIIFRWWKMYNPKQKQHDPKAETRLYITVNDFEFHVYNRSDLYGRLQELFGLEPTIIPPKKDDDKTRENGRTRTQSKIERVKVKTESQDPTSSWRSLIPVIKVNVSTGRLAFGNHYQPQTLCINFDDAFLTYTTKPPSSHLDQFMHIVKGKLENVRVMLVPSPRYVGLQNDEPPRLMGEGFVVLQSNDVDLYYYMDEPGLVPEETEESTEGDISSEDCKLQDLPPCWGLDIVCGKGTDFNYGPWADRQRDCLWKFFFPPDYQVLKVSEIAQPGRPRQILAFELRMNIITDATIDLLFTKNRETNAVHVNVGAGSYLEINIPMTVDENGYTPAIKGQLLHVDATTSMQYRTLLEAEMLAFHINASYPRIWNMPQTWQCELEVYKATYHFIFAQKNFFTDLIQDWSSDNAPDIFSFVPYTWNFKIMFHQFEMIWAANQHNWIDCSTKQQENVYLAACGETLNIDFSLPFTDFVPATCNTRFSLRGEDVDLHLFLPDCHPSKYSLFMLVKNCHPNKMVPETGIPAECQSGQKTVKPKWRNVTQEKAGWVECWTVPSVMLTIDYTWHPIYPQKADEQLKQSLSEMEETMLSVLRPAQKTSERVVSSPSMSPRPPVDPSELPPDKLHVEMELSPDSQITLYGPLLNAFLCIKENYFGEDDMYMDFEEVISSPVLSLSTSSSSGWTAVGMDNDKRENESSAKSIHPLALRPWDITVLVNLYKVHGRLPVHGTTDGPECPTAFLERLCFEMKKGFRETMLQLVLSPLNVFVSDNYQQRPPVDEVLREGHINLSGLQLRAHAMFSAEGLPLGSDSLEYAWLIDVQAGSLTAKVTAPQLACLLEWGQTFVFHVVCREYELERPKSVIVCQHGIDRRFCESKLSCIPGPCPTSDDLKYTMTRLAIDGSDIYIVEHGCATNIKMGAVRIANCNLHNQSVGEGISAAIQDFQVRQYIEQLNNCRIGLQPAVLRRAYWLEAGSANLGLITVDIALAADHHSKHEAQRHFLETHDARTKRLWFLWPDDTLKNKRCRNKCGCLGGCRFFGGTVTGLDFFKLEELTPSSSSAFSSTSAESDMYYGQSLLQPGEWIITKEIPKTVDGNVNSMKRKEWENKSVGIEGERKTQHLSLQVPLRSHSSSSSSEENSSSSAAQPLLAGEKESPSSAADDHSVQKDLLHSARRDDGQASVPTEISGTSPVSPNTQDKSVGQSPLRSPLKRQASVCSTRLGSTKSLTAAFYGDKQPVTVGVQFSSDVSRSDENVLDSPKQRRSFGSFPYTPSADSNSFHQYRSMDSSMSMADSEAYFSAAEEFEPISSDEGPGTYPGRKKKKKQMQQIDYSRGSIYHSVEGPLAVHGEGITDPRTLPFKTHPSQASFVSALGGEDEVIEHVYIVEGEKRGESEQVTSQQPVMSCYHTYLTQFQVINWSVKHPTNKRTSKSSLHRPLDLDTPTSEESSSSFEQLCVPTFKVIKQGLTANSLLDRGMQLSGSTSNTPYTPLDKKIVDTTDDETLTEEWTLDQPVAQTKTTAIVEVKGTVDVVLTPLVAEALDRYIEAMVHRVSTRHPAAIVDDLHTKVLREAVQNSKTTFSENLSPKQDIRGTKTEHPMIGTTNQGQIQTNVTTKQDNVTIKGLQANVSIPKVNLCLLQASVEESPATVPSRSVTHVSLVALCFDRIATQVRMNRGVVEETANNVDAGKTSNFDRYVHASKMQPQSSGSLRSNAGAEKGKEIAAKLNIHRVHGQLRGLDTTDIGTCAITAIPFEKSKVLFTLEELDEFTFVDETDQQAIPDVTRIGPSQEKWGWIMFECGLENLTIKGGRQSGAVLYNSFGIMGKNSVTERGGVLTSNNSSDSPTGSGYNTDVSDDNLPCDRTSPSSDINGNSVSDEQDEGVESDDLKKDLPLMPPPPDSCSMKLTIKEIWFSFAAPTNVRSPAHAFSRQLNLLSTATPAVGAWLVPIDQLKSSLNKLETEGTLRICAVMGCIMTEALENKSVHFPLRSKYNRLTKVARFLQENPSCLLCNILHHYLHQANYSIIDDATMSDGLPALVTLKKGLVALARQWMKFIVVTPAFKGVSLHRPAQPLKPPATVDQEHEEGLGLDNGGGLQSDTSADGAEFEFDAATVSEHTMLLEGTANRPPPGSSGPVTGAEIMRKLSKTHTHSDSALKIKGIHPYHSLSYTSGDTATDSPVHVGRAGMPVKESPRKESLLSYLTGSFPSLHNLLEGTPQRSSAAVKSSSLTRTGNTVATDMLSEHPLLSEPSSVSFYNWMSNAVGNRGSVVQESPVTKSGHNSLPTGVAPNLPTIPSASDFNTVLSSDQNTLDGTHSQHSTSQDDVAGVEEANQGFPAVQLADAQVVFKPLLSHTGIQSQDTMPLCYRMYFGEHLSFSGTLDCLRADIVDSDTAKDRKGKRARRQGHVNLPPLEFKPALMLETFSISAVVMEKSVCTPQNSTSALSFHDLNKRYYNTFHCNFTISCQSISQHVDMALVRLIHQFSTMIDDIKATQTDIKLSRYTAGSASPTPTFKTRKHRDFRSSDFSRSSRGSLNGGNRVNNAKNKRANNENNKKESRNKNSLGRSERRTSKVSRKGSKDVVDHMTIHMDDSDSITVSEQSEPSAECWQNMYKLLNFYSLISDPTGILEKSSETFGPAGVRSPTEPTCRVVFENEQDNNSLTKTQRKRSLVTSEPQHVTLIVFGIGMVNRTHLEADIGGLTMESELKRIHGSFTLKEKMKDVLHQKMTETCATAHIGGVNIVLLEGITPNIQLEDFPTSPTSTAKQEFLTVVKCSIAKSQALYSAQRGLKTNNAAVFKVGAISINIPQHPATLHSMMVRSSHQLSKQISDLIRQPSTAPQPMKEDIATPLPSEKTPTSVNQTPIETNEFPQLPEGLEKKPIVLKFSAMLDGIAIGAALLPSLKAEYKMGRMRSHGMTGAQTRFTFELPNHRLRFTSKVSATDMSTIPPSASLNLPPVTMSGKYIMEEHDSYSDQVWSIDELPSKQGYYLQGNYLRCVAEVGSFEHNLTTDLLNHLVFVQKVFMKEVNEVIQKVSGGEQPIPLWNEHDGTTDGDKPKILLYSLNLQFKGIQVTATTPSMRAVRFETGLIELELSNRLQTKASPGSSSYLKLFGKCQVDLNLALGQIVKHQVYEEAGSDFHQVAYFKTRIGLRNALREEISGSSDREAVLITLNRPIVYAQPVAFDRAVLFWLNYKAAYDNWNEQRMALHKDIHMATKEVVDMLPGIQQTSAQAFGTLFLQLTVNDLGICLPITNTAQSNHTGDLDTGSALVLTIESTLITACSSESLVSKGHFKNFCIRFADGFETSWDDWKPEIRGDLVMNACVVPDGTYEVCSRTTGQAAAESSSAGTWTLNVLWKMCGIDVHMDPNIGKRLNALGNTLTTLTGEEDIDDIADLNSVNIADLSDEDEVDTMSPTIHTEAVDYRRQGTSSSQPGELRGRKIMKRLVDIRELNEQAKVIDDLKKLGASEGTINQEIQRYQQLESVAVNDIRRDVRKKLRRSSMRAASLKDKWGLGYKPSYSRSKSISASGRPPLKRMERASSRIGETDELPEIRVDAASPGPRVTFNIQDTFPEETELDLLSVTIEGPSHYSSNSEGSCSVFSSPKTTGGFSPSVPFQSEDGRRDDSLSSTSEDSEKDEKDEDRERERFYIYRKPSHTSRKKATGFAAVHQLLTERWPTTPVNRSLSGTATERNIDFELDIRVEIDSGKCVLHPTTLLQEHDDISLRRSYDRSSRSLDQDSPSKKKKFQTNYASTTHLMTGKKVPSSLQTKPSDLETTVFYIPGVDVKLHYNSKTLKTESPNASRGSSLPRTLSKESKLYGMKDSAASPSPSPLPCTVQSKTNTLLPPQPPPIPSAKGKGSGGVKTAKLYAWVALQSLPEEMVISPCLLDFLEKALETIPITPIERNYTAVSSQDEDMGHFDIPDPMEESTTSLVSSSTSAYSSFPVDVVVYVRVQPSQIKFSCLPVSRVECMLKLPSLDLVFSSNRGELETLGTTYPAETVSPGSNAPQTGAKTSASKAGMPGSSGLGSPLGRSRHSSSQSDLTGSSSSSSGLSFTACMSDFSLYVFHPYGAGKQKSTVSGLTSGSGGLGNVDEEPTSVTGRKDSLSINLEFVKVSLSRIRRSGGASFFESQSVSKSTSKMDTTLINISAVCDIGSASFKYDMRRLSEILAFPRAWYRRSIARRLFLGDQTVNLPTSGPGTPDSIEGVSQHLSPESSRKAYCRTWDQPSQSASFTHMPQSPNVFNEHMTNNTMSPGTAAQSLKSPASIRSRSVSDSSVPRRDSISKTSTPVNKSNKAASQQGTPWETLVVFAINLKQLNVQMNMSNVMGNTTWTTSGLKSQGRLSVGSNRDREISMSVGLGRSQLDSKGGVVGGTIDVNALEMVAHISEHPNQQPNHKIQITMGSTESRVDYMGSSILMGIFSNADLKLQDEWKVNLYNALDSSMTDKSEIFVHGDLKWDIFQVMISRSTTPDLIKIGMKLQEFFTQQFDTSKRALSTWGPVPYLPPKTMTNNLEKNSQEQLLDAAHHRHWPGVLKVVSGCHISLFQVPLPEDGMQFGGSMSLHGNHMTLACFHGPNFRSKSWALFHLEEPNIAFWTEAQKIWEDGSSDHSTYIVQTLDFHLGHNTMVTKPCGALESPMATITKITRRRHENPPHGVASVKEWFNYVTATRNEELNLLRNVDANNTENSTTVKNSSLLSGFRGGSSYNHETETIFALPRMQLEFKSIHVQEPQEPSLQDASLKPKVECSVVTEFTDHICVTMDAELIMFLHDLVSAYLKEKEKAIFPPRILSTRPGQKCPLIIHDDSSSDRDREDSITYTTVDWRDFMCNTWHLEPTLRLISWTGRKIDPVGVDYILQKLGFHHARTTIPKWLQRGVMDPLDKVLSVLIKKLGTALQDEKEKKGKDKEEH</sequence>
<dbReference type="EMBL" id="AK028716">
    <property type="protein sequence ID" value="BAC26080.1"/>
    <property type="molecule type" value="mRNA"/>
</dbReference>
<dbReference type="EMBL" id="AK041642">
    <property type="protein sequence ID" value="BAC31019.1"/>
    <property type="status" value="ALT_SEQ"/>
    <property type="molecule type" value="mRNA"/>
</dbReference>
<dbReference type="EMBL" id="AK052702">
    <property type="protein sequence ID" value="BAC35104.1"/>
    <property type="status" value="ALT_INIT"/>
    <property type="molecule type" value="mRNA"/>
</dbReference>
<dbReference type="EMBL" id="AK134811">
    <property type="protein sequence ID" value="BAE22295.1"/>
    <property type="molecule type" value="mRNA"/>
</dbReference>
<dbReference type="EMBL" id="AK148181">
    <property type="protein sequence ID" value="BAE28401.1"/>
    <property type="molecule type" value="mRNA"/>
</dbReference>
<dbReference type="EMBL" id="AL627102">
    <property type="status" value="NOT_ANNOTATED_CDS"/>
    <property type="molecule type" value="Genomic_DNA"/>
</dbReference>
<dbReference type="EMBL" id="AL691425">
    <property type="protein sequence ID" value="CAM18175.4"/>
    <property type="molecule type" value="Genomic_DNA"/>
</dbReference>
<dbReference type="EMBL" id="AL645759">
    <property type="protein sequence ID" value="CAM18175.4"/>
    <property type="status" value="JOINED"/>
    <property type="molecule type" value="Genomic_DNA"/>
</dbReference>
<dbReference type="EMBL" id="AL662823">
    <property type="protein sequence ID" value="CAM18175.4"/>
    <property type="status" value="JOINED"/>
    <property type="molecule type" value="Genomic_DNA"/>
</dbReference>
<dbReference type="EMBL" id="AL662823">
    <property type="protein sequence ID" value="CAM18416.3"/>
    <property type="molecule type" value="Genomic_DNA"/>
</dbReference>
<dbReference type="EMBL" id="AL645759">
    <property type="protein sequence ID" value="CAM18416.3"/>
    <property type="status" value="JOINED"/>
    <property type="molecule type" value="Genomic_DNA"/>
</dbReference>
<dbReference type="EMBL" id="AL691425">
    <property type="protein sequence ID" value="CAM18416.3"/>
    <property type="status" value="JOINED"/>
    <property type="molecule type" value="Genomic_DNA"/>
</dbReference>
<dbReference type="EMBL" id="AL645759">
    <property type="protein sequence ID" value="CAM24476.3"/>
    <property type="molecule type" value="Genomic_DNA"/>
</dbReference>
<dbReference type="EMBL" id="AL662823">
    <property type="protein sequence ID" value="CAM24476.3"/>
    <property type="status" value="JOINED"/>
    <property type="molecule type" value="Genomic_DNA"/>
</dbReference>
<dbReference type="EMBL" id="AL691425">
    <property type="protein sequence ID" value="CAM24476.3"/>
    <property type="status" value="JOINED"/>
    <property type="molecule type" value="Genomic_DNA"/>
</dbReference>
<dbReference type="EMBL" id="AL645753">
    <property type="protein sequence ID" value="CAM28060.1"/>
    <property type="status" value="ALT_SEQ"/>
    <property type="molecule type" value="Genomic_DNA"/>
</dbReference>
<dbReference type="EMBL" id="AL645806">
    <property type="protein sequence ID" value="CAM28060.1"/>
    <property type="status" value="JOINED"/>
    <property type="molecule type" value="Genomic_DNA"/>
</dbReference>
<dbReference type="EMBL" id="AL645753">
    <property type="protein sequence ID" value="CAM28062.1"/>
    <property type="molecule type" value="Genomic_DNA"/>
</dbReference>
<dbReference type="EMBL" id="AL645806">
    <property type="protein sequence ID" value="CAM28062.1"/>
    <property type="status" value="JOINED"/>
    <property type="molecule type" value="Genomic_DNA"/>
</dbReference>
<dbReference type="EMBL" id="AL645806">
    <property type="protein sequence ID" value="CAM28069.1"/>
    <property type="status" value="ALT_SEQ"/>
    <property type="molecule type" value="Genomic_DNA"/>
</dbReference>
<dbReference type="EMBL" id="AL645753">
    <property type="protein sequence ID" value="CAM28069.1"/>
    <property type="status" value="JOINED"/>
    <property type="molecule type" value="Genomic_DNA"/>
</dbReference>
<dbReference type="EMBL" id="AL645806">
    <property type="protein sequence ID" value="CAM28070.1"/>
    <property type="molecule type" value="Genomic_DNA"/>
</dbReference>
<dbReference type="EMBL" id="AL645753">
    <property type="protein sequence ID" value="CAM28070.1"/>
    <property type="status" value="JOINED"/>
    <property type="molecule type" value="Genomic_DNA"/>
</dbReference>
<dbReference type="EMBL" id="AK220265">
    <property type="protein sequence ID" value="BAD90190.1"/>
    <property type="status" value="ALT_INIT"/>
    <property type="molecule type" value="mRNA"/>
</dbReference>
<dbReference type="EMBL" id="BC027125">
    <property type="protein sequence ID" value="AAH27125.3"/>
    <property type="status" value="ALT_INIT"/>
    <property type="molecule type" value="mRNA"/>
</dbReference>
<dbReference type="EMBL" id="BC034738">
    <property type="protein sequence ID" value="AAH34738.1"/>
    <property type="molecule type" value="mRNA"/>
</dbReference>
<dbReference type="EMBL" id="BC079623">
    <property type="protein sequence ID" value="AAH79623.1"/>
    <property type="status" value="ALT_INIT"/>
    <property type="molecule type" value="mRNA"/>
</dbReference>
<dbReference type="EMBL" id="AK173100">
    <property type="protein sequence ID" value="BAD32378.1"/>
    <property type="molecule type" value="mRNA"/>
</dbReference>
<dbReference type="CCDS" id="CCDS50894.1">
    <molecule id="A2AAE1-1"/>
</dbReference>
<dbReference type="RefSeq" id="NP_766267.2">
    <molecule id="A2AAE1-1"/>
    <property type="nucleotide sequence ID" value="NM_172679.2"/>
</dbReference>
<dbReference type="SMR" id="A2AAE1"/>
<dbReference type="BioGRID" id="230823">
    <property type="interactions" value="11"/>
</dbReference>
<dbReference type="FunCoup" id="A2AAE1">
    <property type="interactions" value="4082"/>
</dbReference>
<dbReference type="IntAct" id="A2AAE1">
    <property type="interactions" value="5"/>
</dbReference>
<dbReference type="STRING" id="10090.ENSMUSP00000060199"/>
<dbReference type="GlyGen" id="A2AAE1">
    <property type="glycosylation" value="6 sites, 4 N-linked glycans (4 sites), 1 O-linked glycan (1 site)"/>
</dbReference>
<dbReference type="iPTMnet" id="A2AAE1"/>
<dbReference type="PhosphoSitePlus" id="A2AAE1"/>
<dbReference type="SwissPalm" id="A2AAE1"/>
<dbReference type="jPOST" id="A2AAE1"/>
<dbReference type="PaxDb" id="10090-ENSMUSP00000060199"/>
<dbReference type="PeptideAtlas" id="A2AAE1"/>
<dbReference type="ProteomicsDB" id="269431">
    <molecule id="A2AAE1-1"/>
</dbReference>
<dbReference type="ProteomicsDB" id="269432">
    <molecule id="A2AAE1-2"/>
</dbReference>
<dbReference type="ProteomicsDB" id="269433">
    <molecule id="A2AAE1-3"/>
</dbReference>
<dbReference type="ProteomicsDB" id="269434">
    <molecule id="A2AAE1-4"/>
</dbReference>
<dbReference type="ProteomicsDB" id="269435">
    <molecule id="A2AAE1-5"/>
</dbReference>
<dbReference type="ProteomicsDB" id="269436">
    <molecule id="A2AAE1-6"/>
</dbReference>
<dbReference type="Antibodypedia" id="26783">
    <property type="antibodies" value="12 antibodies from 7 providers"/>
</dbReference>
<dbReference type="Ensembl" id="ENSMUST00000057272.15">
    <molecule id="A2AAE1-1"/>
    <property type="protein sequence ID" value="ENSMUSP00000060199.9"/>
    <property type="gene ID" value="ENSMUSG00000037270.19"/>
</dbReference>
<dbReference type="Ensembl" id="ENSMUST00000152564.8">
    <molecule id="A2AAE1-1"/>
    <property type="protein sequence ID" value="ENSMUSP00000117808.2"/>
    <property type="gene ID" value="ENSMUSG00000037270.19"/>
</dbReference>
<dbReference type="GeneID" id="229227"/>
<dbReference type="KEGG" id="mmu:229227"/>
<dbReference type="UCSC" id="uc008ozw.2">
    <molecule id="A2AAE1-5"/>
    <property type="organism name" value="mouse"/>
</dbReference>
<dbReference type="UCSC" id="uc008pab.2">
    <molecule id="A2AAE1-1"/>
    <property type="organism name" value="mouse"/>
</dbReference>
<dbReference type="AGR" id="MGI:2444631"/>
<dbReference type="CTD" id="84162"/>
<dbReference type="MGI" id="MGI:2444631">
    <property type="gene designation" value="Bltp1"/>
</dbReference>
<dbReference type="VEuPathDB" id="HostDB:ENSMUSG00000037270"/>
<dbReference type="eggNOG" id="KOG3596">
    <property type="taxonomic scope" value="Eukaryota"/>
</dbReference>
<dbReference type="GeneTree" id="ENSGT00640000091487"/>
<dbReference type="HOGENOM" id="CLU_000118_0_0_1"/>
<dbReference type="InParanoid" id="A2AAE1"/>
<dbReference type="OMA" id="MRHELRH"/>
<dbReference type="PhylomeDB" id="A2AAE1"/>
<dbReference type="TreeFam" id="TF105915"/>
<dbReference type="BioGRID-ORCS" id="229227">
    <property type="hits" value="7 hits in 77 CRISPR screens"/>
</dbReference>
<dbReference type="ChiTaRS" id="4932438A13Rik">
    <property type="organism name" value="mouse"/>
</dbReference>
<dbReference type="PRO" id="PR:A2AAE1"/>
<dbReference type="Proteomes" id="UP000000589">
    <property type="component" value="Chromosome 3"/>
</dbReference>
<dbReference type="RNAct" id="A2AAE1">
    <property type="molecule type" value="protein"/>
</dbReference>
<dbReference type="Bgee" id="ENSMUSG00000037270">
    <property type="expression patterns" value="Expressed in spermatocyte and 249 other cell types or tissues"/>
</dbReference>
<dbReference type="ExpressionAtlas" id="A2AAE1">
    <property type="expression patterns" value="baseline and differential"/>
</dbReference>
<dbReference type="GO" id="GO:0005789">
    <property type="term" value="C:endoplasmic reticulum membrane"/>
    <property type="evidence" value="ECO:0007669"/>
    <property type="project" value="UniProtKB-SubCell"/>
</dbReference>
<dbReference type="GO" id="GO:0140268">
    <property type="term" value="C:endoplasmic reticulum-plasma membrane contact site"/>
    <property type="evidence" value="ECO:0000250"/>
    <property type="project" value="UniProtKB"/>
</dbReference>
<dbReference type="GO" id="GO:0031966">
    <property type="term" value="C:mitochondrial membrane"/>
    <property type="evidence" value="ECO:0007669"/>
    <property type="project" value="UniProtKB-SubCell"/>
</dbReference>
<dbReference type="GO" id="GO:0005634">
    <property type="term" value="C:nucleus"/>
    <property type="evidence" value="ECO:0000303"/>
    <property type="project" value="BHF-UCL"/>
</dbReference>
<dbReference type="GO" id="GO:0005886">
    <property type="term" value="C:plasma membrane"/>
    <property type="evidence" value="ECO:0007669"/>
    <property type="project" value="UniProtKB-SubCell"/>
</dbReference>
<dbReference type="GO" id="GO:1904121">
    <property type="term" value="F:phosphatidylethanolamine transfer activity"/>
    <property type="evidence" value="ECO:0000250"/>
    <property type="project" value="UniProtKB"/>
</dbReference>
<dbReference type="GO" id="GO:0060612">
    <property type="term" value="P:adipose tissue development"/>
    <property type="evidence" value="ECO:0000303"/>
    <property type="project" value="BHF-UCL"/>
</dbReference>
<dbReference type="GO" id="GO:0032456">
    <property type="term" value="P:endocytic recycling"/>
    <property type="evidence" value="ECO:0000250"/>
    <property type="project" value="UniProtKB"/>
</dbReference>
<dbReference type="GO" id="GO:0016197">
    <property type="term" value="P:endosomal transport"/>
    <property type="evidence" value="ECO:0000250"/>
    <property type="project" value="UniProtKB"/>
</dbReference>
<dbReference type="GO" id="GO:0045444">
    <property type="term" value="P:fat cell differentiation"/>
    <property type="evidence" value="ECO:0000303"/>
    <property type="project" value="BHF-UCL"/>
</dbReference>
<dbReference type="GO" id="GO:0120009">
    <property type="term" value="P:intermembrane lipid transfer"/>
    <property type="evidence" value="ECO:0000250"/>
    <property type="project" value="UniProtKB"/>
</dbReference>
<dbReference type="GO" id="GO:0006629">
    <property type="term" value="P:lipid metabolic process"/>
    <property type="evidence" value="ECO:0000303"/>
    <property type="project" value="BHF-UCL"/>
</dbReference>
<dbReference type="GO" id="GO:0019915">
    <property type="term" value="P:lipid storage"/>
    <property type="evidence" value="ECO:0000303"/>
    <property type="project" value="BHF-UCL"/>
</dbReference>
<dbReference type="GO" id="GO:0006869">
    <property type="term" value="P:lipid transport"/>
    <property type="evidence" value="ECO:0000315"/>
    <property type="project" value="MGI"/>
</dbReference>
<dbReference type="GO" id="GO:0051647">
    <property type="term" value="P:nucleus localization"/>
    <property type="evidence" value="ECO:0000303"/>
    <property type="project" value="BHF-UCL"/>
</dbReference>
<dbReference type="GO" id="GO:0006909">
    <property type="term" value="P:phagocytosis"/>
    <property type="evidence" value="ECO:0000250"/>
    <property type="project" value="UniProtKB"/>
</dbReference>
<dbReference type="GO" id="GO:0001558">
    <property type="term" value="P:regulation of cell growth"/>
    <property type="evidence" value="ECO:0000303"/>
    <property type="project" value="BHF-UCL"/>
</dbReference>
<dbReference type="GO" id="GO:0009409">
    <property type="term" value="P:response to cold"/>
    <property type="evidence" value="ECO:0000315"/>
    <property type="project" value="MGI"/>
</dbReference>
<dbReference type="GO" id="GO:0007283">
    <property type="term" value="P:spermatogenesis"/>
    <property type="evidence" value="ECO:0000303"/>
    <property type="project" value="BHF-UCL"/>
</dbReference>
<dbReference type="InterPro" id="IPR033616">
    <property type="entry name" value="BLTP1"/>
</dbReference>
<dbReference type="InterPro" id="IPR056742">
    <property type="entry name" value="BLTP1_C"/>
</dbReference>
<dbReference type="InterPro" id="IPR056741">
    <property type="entry name" value="BLTP1_M"/>
</dbReference>
<dbReference type="InterPro" id="IPR047104">
    <property type="entry name" value="BLTP1_N"/>
</dbReference>
<dbReference type="PANTHER" id="PTHR31640:SF1">
    <property type="entry name" value="BRIDGE-LIKE LIPID TRANSFER PROTEIN FAMILY MEMBER 1"/>
    <property type="match status" value="1"/>
</dbReference>
<dbReference type="PANTHER" id="PTHR31640">
    <property type="entry name" value="TRANSMEMBRANE PROTEIN KIAA1109"/>
    <property type="match status" value="1"/>
</dbReference>
<dbReference type="Pfam" id="PF25040">
    <property type="entry name" value="BLTP1_C"/>
    <property type="match status" value="1"/>
</dbReference>
<dbReference type="Pfam" id="PF25039">
    <property type="entry name" value="BLTP1_M"/>
    <property type="match status" value="1"/>
</dbReference>
<dbReference type="Pfam" id="PF20413">
    <property type="entry name" value="BLTP1_N"/>
    <property type="match status" value="1"/>
</dbReference>
<dbReference type="SMART" id="SM01220">
    <property type="entry name" value="FSA_C"/>
    <property type="match status" value="1"/>
</dbReference>
<gene>
    <name type="primary">Bltp1</name>
    <name type="synonym">Fsa</name>
    <name type="synonym">Kiaa1109</name>
    <name type="synonym">Kiaa1371</name>
</gene>
<keyword id="KW-0025">Alternative splicing</keyword>
<keyword id="KW-1003">Cell membrane</keyword>
<keyword id="KW-0256">Endoplasmic reticulum</keyword>
<keyword id="KW-0472">Membrane</keyword>
<keyword id="KW-0496">Mitochondrion</keyword>
<keyword id="KW-0597">Phosphoprotein</keyword>
<keyword id="KW-1185">Reference proteome</keyword>
<keyword id="KW-0812">Transmembrane</keyword>
<keyword id="KW-1133">Transmembrane helix</keyword>
<protein>
    <recommendedName>
        <fullName>Bridge-like lipid transfer protein family member 1</fullName>
    </recommendedName>
    <alternativeName>
        <fullName>Fragile site-associated protein homolog</fullName>
    </alternativeName>
</protein>
<reference key="1">
    <citation type="journal article" date="2005" name="Science">
        <title>The transcriptional landscape of the mammalian genome.</title>
        <authorList>
            <person name="Carninci P."/>
            <person name="Kasukawa T."/>
            <person name="Katayama S."/>
            <person name="Gough J."/>
            <person name="Frith M.C."/>
            <person name="Maeda N."/>
            <person name="Oyama R."/>
            <person name="Ravasi T."/>
            <person name="Lenhard B."/>
            <person name="Wells C."/>
            <person name="Kodzius R."/>
            <person name="Shimokawa K."/>
            <person name="Bajic V.B."/>
            <person name="Brenner S.E."/>
            <person name="Batalov S."/>
            <person name="Forrest A.R."/>
            <person name="Zavolan M."/>
            <person name="Davis M.J."/>
            <person name="Wilming L.G."/>
            <person name="Aidinis V."/>
            <person name="Allen J.E."/>
            <person name="Ambesi-Impiombato A."/>
            <person name="Apweiler R."/>
            <person name="Aturaliya R.N."/>
            <person name="Bailey T.L."/>
            <person name="Bansal M."/>
            <person name="Baxter L."/>
            <person name="Beisel K.W."/>
            <person name="Bersano T."/>
            <person name="Bono H."/>
            <person name="Chalk A.M."/>
            <person name="Chiu K.P."/>
            <person name="Choudhary V."/>
            <person name="Christoffels A."/>
            <person name="Clutterbuck D.R."/>
            <person name="Crowe M.L."/>
            <person name="Dalla E."/>
            <person name="Dalrymple B.P."/>
            <person name="de Bono B."/>
            <person name="Della Gatta G."/>
            <person name="di Bernardo D."/>
            <person name="Down T."/>
            <person name="Engstrom P."/>
            <person name="Fagiolini M."/>
            <person name="Faulkner G."/>
            <person name="Fletcher C.F."/>
            <person name="Fukushima T."/>
            <person name="Furuno M."/>
            <person name="Futaki S."/>
            <person name="Gariboldi M."/>
            <person name="Georgii-Hemming P."/>
            <person name="Gingeras T.R."/>
            <person name="Gojobori T."/>
            <person name="Green R.E."/>
            <person name="Gustincich S."/>
            <person name="Harbers M."/>
            <person name="Hayashi Y."/>
            <person name="Hensch T.K."/>
            <person name="Hirokawa N."/>
            <person name="Hill D."/>
            <person name="Huminiecki L."/>
            <person name="Iacono M."/>
            <person name="Ikeo K."/>
            <person name="Iwama A."/>
            <person name="Ishikawa T."/>
            <person name="Jakt M."/>
            <person name="Kanapin A."/>
            <person name="Katoh M."/>
            <person name="Kawasawa Y."/>
            <person name="Kelso J."/>
            <person name="Kitamura H."/>
            <person name="Kitano H."/>
            <person name="Kollias G."/>
            <person name="Krishnan S.P."/>
            <person name="Kruger A."/>
            <person name="Kummerfeld S.K."/>
            <person name="Kurochkin I.V."/>
            <person name="Lareau L.F."/>
            <person name="Lazarevic D."/>
            <person name="Lipovich L."/>
            <person name="Liu J."/>
            <person name="Liuni S."/>
            <person name="McWilliam S."/>
            <person name="Madan Babu M."/>
            <person name="Madera M."/>
            <person name="Marchionni L."/>
            <person name="Matsuda H."/>
            <person name="Matsuzawa S."/>
            <person name="Miki H."/>
            <person name="Mignone F."/>
            <person name="Miyake S."/>
            <person name="Morris K."/>
            <person name="Mottagui-Tabar S."/>
            <person name="Mulder N."/>
            <person name="Nakano N."/>
            <person name="Nakauchi H."/>
            <person name="Ng P."/>
            <person name="Nilsson R."/>
            <person name="Nishiguchi S."/>
            <person name="Nishikawa S."/>
            <person name="Nori F."/>
            <person name="Ohara O."/>
            <person name="Okazaki Y."/>
            <person name="Orlando V."/>
            <person name="Pang K.C."/>
            <person name="Pavan W.J."/>
            <person name="Pavesi G."/>
            <person name="Pesole G."/>
            <person name="Petrovsky N."/>
            <person name="Piazza S."/>
            <person name="Reed J."/>
            <person name="Reid J.F."/>
            <person name="Ring B.Z."/>
            <person name="Ringwald M."/>
            <person name="Rost B."/>
            <person name="Ruan Y."/>
            <person name="Salzberg S.L."/>
            <person name="Sandelin A."/>
            <person name="Schneider C."/>
            <person name="Schoenbach C."/>
            <person name="Sekiguchi K."/>
            <person name="Semple C.A."/>
            <person name="Seno S."/>
            <person name="Sessa L."/>
            <person name="Sheng Y."/>
            <person name="Shibata Y."/>
            <person name="Shimada H."/>
            <person name="Shimada K."/>
            <person name="Silva D."/>
            <person name="Sinclair B."/>
            <person name="Sperling S."/>
            <person name="Stupka E."/>
            <person name="Sugiura K."/>
            <person name="Sultana R."/>
            <person name="Takenaka Y."/>
            <person name="Taki K."/>
            <person name="Tammoja K."/>
            <person name="Tan S.L."/>
            <person name="Tang S."/>
            <person name="Taylor M.S."/>
            <person name="Tegner J."/>
            <person name="Teichmann S.A."/>
            <person name="Ueda H.R."/>
            <person name="van Nimwegen E."/>
            <person name="Verardo R."/>
            <person name="Wei C.L."/>
            <person name="Yagi K."/>
            <person name="Yamanishi H."/>
            <person name="Zabarovsky E."/>
            <person name="Zhu S."/>
            <person name="Zimmer A."/>
            <person name="Hide W."/>
            <person name="Bult C."/>
            <person name="Grimmond S.M."/>
            <person name="Teasdale R.D."/>
            <person name="Liu E.T."/>
            <person name="Brusic V."/>
            <person name="Quackenbush J."/>
            <person name="Wahlestedt C."/>
            <person name="Mattick J.S."/>
            <person name="Hume D.A."/>
            <person name="Kai C."/>
            <person name="Sasaki D."/>
            <person name="Tomaru Y."/>
            <person name="Fukuda S."/>
            <person name="Kanamori-Katayama M."/>
            <person name="Suzuki M."/>
            <person name="Aoki J."/>
            <person name="Arakawa T."/>
            <person name="Iida J."/>
            <person name="Imamura K."/>
            <person name="Itoh M."/>
            <person name="Kato T."/>
            <person name="Kawaji H."/>
            <person name="Kawagashira N."/>
            <person name="Kawashima T."/>
            <person name="Kojima M."/>
            <person name="Kondo S."/>
            <person name="Konno H."/>
            <person name="Nakano K."/>
            <person name="Ninomiya N."/>
            <person name="Nishio T."/>
            <person name="Okada M."/>
            <person name="Plessy C."/>
            <person name="Shibata K."/>
            <person name="Shiraki T."/>
            <person name="Suzuki S."/>
            <person name="Tagami M."/>
            <person name="Waki K."/>
            <person name="Watahiki A."/>
            <person name="Okamura-Oho Y."/>
            <person name="Suzuki H."/>
            <person name="Kawai J."/>
            <person name="Hayashizaki Y."/>
        </authorList>
    </citation>
    <scope>NUCLEOTIDE SEQUENCE [LARGE SCALE MRNA] (ISOFORM 5)</scope>
    <scope>NUCLEOTIDE SEQUENCE [LARGE SCALE MRNA] OF 4183-4995 (ISOFORM 1)</scope>
    <scope>NUCLEOTIDE SEQUENCE [LARGE SCALE MRNA] OF 3903-5005 (ISOFORM 6)</scope>
    <source>
        <strain>C57BL/6J</strain>
        <tissue>Kidney</tissue>
        <tissue>Medulla oblongata</tissue>
        <tissue>Skin</tissue>
        <tissue>Testis</tissue>
        <tissue>Thymus</tissue>
    </source>
</reference>
<reference key="2">
    <citation type="journal article" date="2009" name="PLoS Biol.">
        <title>Lineage-specific biology revealed by a finished genome assembly of the mouse.</title>
        <authorList>
            <person name="Church D.M."/>
            <person name="Goodstadt L."/>
            <person name="Hillier L.W."/>
            <person name="Zody M.C."/>
            <person name="Goldstein S."/>
            <person name="She X."/>
            <person name="Bult C.J."/>
            <person name="Agarwala R."/>
            <person name="Cherry J.L."/>
            <person name="DiCuccio M."/>
            <person name="Hlavina W."/>
            <person name="Kapustin Y."/>
            <person name="Meric P."/>
            <person name="Maglott D."/>
            <person name="Birtle Z."/>
            <person name="Marques A.C."/>
            <person name="Graves T."/>
            <person name="Zhou S."/>
            <person name="Teague B."/>
            <person name="Potamousis K."/>
            <person name="Churas C."/>
            <person name="Place M."/>
            <person name="Herschleb J."/>
            <person name="Runnheim R."/>
            <person name="Forrest D."/>
            <person name="Amos-Landgraf J."/>
            <person name="Schwartz D.C."/>
            <person name="Cheng Z."/>
            <person name="Lindblad-Toh K."/>
            <person name="Eichler E.E."/>
            <person name="Ponting C.P."/>
        </authorList>
    </citation>
    <scope>NUCLEOTIDE SEQUENCE [LARGE SCALE GENOMIC DNA]</scope>
    <source>
        <strain>C57BL/6J</strain>
    </source>
</reference>
<reference key="3">
    <citation type="submission" date="2005-02" db="EMBL/GenBank/DDBJ databases">
        <title>Prediction of the coding sequences of mouse homologues of KIAA gene. The complete nucleotide sequences of mouse KIAA-homologous cDNAs identified by screening of terminal sequences of cDNA clones randomly sampled from size-fractionated libraries.</title>
        <authorList>
            <person name="Okazaki N."/>
            <person name="Kikuno R.F."/>
            <person name="Ohara R."/>
            <person name="Inamoto S."/>
            <person name="Nagase T."/>
            <person name="Ohara O."/>
            <person name="Koga H."/>
        </authorList>
    </citation>
    <scope>NUCLEOTIDE SEQUENCE [LARGE SCALE MRNA] OF 1-1415 (ISOFORM 4)</scope>
    <source>
        <tissue>Pancreatic islet</tissue>
    </source>
</reference>
<reference key="4">
    <citation type="journal article" date="2004" name="Genome Res.">
        <title>The status, quality, and expansion of the NIH full-length cDNA project: the Mammalian Gene Collection (MGC).</title>
        <authorList>
            <consortium name="The MGC Project Team"/>
        </authorList>
    </citation>
    <scope>NUCLEOTIDE SEQUENCE [LARGE SCALE MRNA] OF 261-1421 AND 4332-5005 (ISOFORM 1)</scope>
    <scope>NUCLEOTIDE SEQUENCE [LARGE SCALE MRNA] OF 3442-5005 (ISOFORM 2)</scope>
    <source>
        <strain>C57BL/6J</strain>
        <strain>FVB/N</strain>
        <tissue>Brain</tissue>
        <tissue>Eye</tissue>
        <tissue>Mammary tumor</tissue>
    </source>
</reference>
<reference key="5">
    <citation type="journal article" date="2004" name="DNA Res.">
        <title>Prediction of the coding sequences of mouse homologues of KIAA gene: IV. The complete nucleotide sequences of 500 mouse KIAA-homologous cDNAs identified by screening of terminal sequences of cDNA clones randomly sampled from size-fractionated libraries.</title>
        <authorList>
            <person name="Okazaki N."/>
            <person name="Kikuno R."/>
            <person name="Ohara R."/>
            <person name="Inamoto S."/>
            <person name="Koseki H."/>
            <person name="Hiraoka S."/>
            <person name="Saga Y."/>
            <person name="Seino S."/>
            <person name="Nishimura M."/>
            <person name="Kaisho T."/>
            <person name="Hoshino K."/>
            <person name="Kitamura H."/>
            <person name="Nagase T."/>
            <person name="Ohara O."/>
            <person name="Koga H."/>
        </authorList>
    </citation>
    <scope>NUCLEOTIDE SEQUENCE [LARGE SCALE MRNA] OF 3385-5005 (ISOFORM 3)</scope>
    <source>
        <tissue>Embryonic intestine</tissue>
    </source>
</reference>
<reference key="6">
    <citation type="journal article" date="2006" name="Gene">
        <title>Molecular cloning of Chinese hamster 1q31 chromosomal fragile site DNA that is important to mdr1 gene amplification reveals a novel gene whose expression is associated with spermatocyte and adipocyte differentiation.</title>
        <authorList>
            <person name="Wei Y."/>
            <person name="Lin-Lee Y.-C."/>
            <person name="Yang X."/>
            <person name="Dai W."/>
            <person name="Zhao S."/>
            <person name="Rassool F.V."/>
            <person name="Elgart G.W."/>
            <person name="Feun L."/>
            <person name="Savaraj N."/>
            <person name="Kuo M.T."/>
        </authorList>
    </citation>
    <scope>TISSUE SPECIFICITY</scope>
    <scope>DEVELOPMENTAL STAGE</scope>
</reference>
<reference key="7">
    <citation type="journal article" date="2009" name="Immunity">
        <title>The phagosomal proteome in interferon-gamma-activated macrophages.</title>
        <authorList>
            <person name="Trost M."/>
            <person name="English L."/>
            <person name="Lemieux S."/>
            <person name="Courcelles M."/>
            <person name="Desjardins M."/>
            <person name="Thibault P."/>
        </authorList>
    </citation>
    <scope>PHOSPHORYLATION [LARGE SCALE ANALYSIS] AT SER-2755 AND SER-3653</scope>
    <scope>IDENTIFICATION BY MASS SPECTROMETRY [LARGE SCALE ANALYSIS]</scope>
</reference>
<reference key="8">
    <citation type="journal article" date="2010" name="Cell">
        <title>A tissue-specific atlas of mouse protein phosphorylation and expression.</title>
        <authorList>
            <person name="Huttlin E.L."/>
            <person name="Jedrychowski M.P."/>
            <person name="Elias J.E."/>
            <person name="Goswami T."/>
            <person name="Rad R."/>
            <person name="Beausoleil S.A."/>
            <person name="Villen J."/>
            <person name="Haas W."/>
            <person name="Sowa M.E."/>
            <person name="Gygi S.P."/>
        </authorList>
    </citation>
    <scope>PHOSPHORYLATION [LARGE SCALE ANALYSIS] AT SER-1323; SER-1355; SER-1805; SER-1808; SER-2601 AND SER-4124</scope>
    <scope>PHOSPHORYLATION [LARGE SCALE ANALYSIS] AT SER-3577 (ISOFORM 3)</scope>
    <scope>IDENTIFICATION BY MASS SPECTROMETRY [LARGE SCALE ANALYSIS]</scope>
    <source>
        <tissue>Brain</tissue>
        <tissue>Heart</tissue>
        <tissue>Kidney</tissue>
        <tissue>Lung</tissue>
        <tissue>Pancreas</tissue>
        <tissue>Testis</tissue>
    </source>
</reference>
<name>BLTP1_MOUSE</name>
<evidence type="ECO:0000250" key="1">
    <source>
        <dbReference type="UniProtKB" id="Q12150"/>
    </source>
</evidence>
<evidence type="ECO:0000250" key="2">
    <source>
        <dbReference type="UniProtKB" id="Q2LD37"/>
    </source>
</evidence>
<evidence type="ECO:0000255" key="3"/>
<evidence type="ECO:0000256" key="4">
    <source>
        <dbReference type="SAM" id="MobiDB-lite"/>
    </source>
</evidence>
<evidence type="ECO:0000269" key="5">
    <source>
    </source>
</evidence>
<evidence type="ECO:0000303" key="6">
    <source>
    </source>
</evidence>
<evidence type="ECO:0000303" key="7">
    <source>
    </source>
</evidence>
<evidence type="ECO:0000303" key="8">
    <source>
    </source>
</evidence>
<evidence type="ECO:0000303" key="9">
    <source ref="3"/>
</evidence>
<evidence type="ECO:0000305" key="10"/>
<evidence type="ECO:0007744" key="11">
    <source>
    </source>
</evidence>
<evidence type="ECO:0007744" key="12">
    <source>
    </source>
</evidence>